<protein>
    <recommendedName>
        <fullName evidence="1">3-phosphoshikimate 1-carboxyvinyltransferase</fullName>
        <ecNumber evidence="1">2.5.1.19</ecNumber>
    </recommendedName>
    <alternativeName>
        <fullName evidence="1">5-enolpyruvylshikimate-3-phosphate synthase</fullName>
        <shortName evidence="1">EPSP synthase</shortName>
        <shortName evidence="1">EPSPS</shortName>
    </alternativeName>
</protein>
<keyword id="KW-0028">Amino-acid biosynthesis</keyword>
<keyword id="KW-0057">Aromatic amino acid biosynthesis</keyword>
<keyword id="KW-0963">Cytoplasm</keyword>
<keyword id="KW-0808">Transferase</keyword>
<evidence type="ECO:0000255" key="1">
    <source>
        <dbReference type="HAMAP-Rule" id="MF_00210"/>
    </source>
</evidence>
<gene>
    <name evidence="1" type="primary">aroA</name>
    <name type="ordered locus">VIBHAR_01572</name>
</gene>
<feature type="chain" id="PRO_1000012506" description="3-phosphoshikimate 1-carboxyvinyltransferase">
    <location>
        <begin position="1"/>
        <end position="426"/>
    </location>
</feature>
<feature type="active site" description="Proton acceptor" evidence="1">
    <location>
        <position position="314"/>
    </location>
</feature>
<feature type="binding site" evidence="1">
    <location>
        <position position="22"/>
    </location>
    <ligand>
        <name>3-phosphoshikimate</name>
        <dbReference type="ChEBI" id="CHEBI:145989"/>
    </ligand>
</feature>
<feature type="binding site" evidence="1">
    <location>
        <position position="22"/>
    </location>
    <ligand>
        <name>phosphoenolpyruvate</name>
        <dbReference type="ChEBI" id="CHEBI:58702"/>
    </ligand>
</feature>
<feature type="binding site" evidence="1">
    <location>
        <position position="23"/>
    </location>
    <ligand>
        <name>3-phosphoshikimate</name>
        <dbReference type="ChEBI" id="CHEBI:145989"/>
    </ligand>
</feature>
<feature type="binding site" evidence="1">
    <location>
        <position position="27"/>
    </location>
    <ligand>
        <name>3-phosphoshikimate</name>
        <dbReference type="ChEBI" id="CHEBI:145989"/>
    </ligand>
</feature>
<feature type="binding site" evidence="1">
    <location>
        <position position="96"/>
    </location>
    <ligand>
        <name>phosphoenolpyruvate</name>
        <dbReference type="ChEBI" id="CHEBI:58702"/>
    </ligand>
</feature>
<feature type="binding site" evidence="1">
    <location>
        <position position="124"/>
    </location>
    <ligand>
        <name>phosphoenolpyruvate</name>
        <dbReference type="ChEBI" id="CHEBI:58702"/>
    </ligand>
</feature>
<feature type="binding site" evidence="1">
    <location>
        <position position="170"/>
    </location>
    <ligand>
        <name>3-phosphoshikimate</name>
        <dbReference type="ChEBI" id="CHEBI:145989"/>
    </ligand>
</feature>
<feature type="binding site" evidence="1">
    <location>
        <position position="171"/>
    </location>
    <ligand>
        <name>3-phosphoshikimate</name>
        <dbReference type="ChEBI" id="CHEBI:145989"/>
    </ligand>
</feature>
<feature type="binding site" evidence="1">
    <location>
        <position position="172"/>
    </location>
    <ligand>
        <name>3-phosphoshikimate</name>
        <dbReference type="ChEBI" id="CHEBI:145989"/>
    </ligand>
</feature>
<feature type="binding site" evidence="1">
    <location>
        <position position="172"/>
    </location>
    <ligand>
        <name>phosphoenolpyruvate</name>
        <dbReference type="ChEBI" id="CHEBI:58702"/>
    </ligand>
</feature>
<feature type="binding site" evidence="1">
    <location>
        <position position="198"/>
    </location>
    <ligand>
        <name>3-phosphoshikimate</name>
        <dbReference type="ChEBI" id="CHEBI:145989"/>
    </ligand>
</feature>
<feature type="binding site" evidence="1">
    <location>
        <position position="314"/>
    </location>
    <ligand>
        <name>3-phosphoshikimate</name>
        <dbReference type="ChEBI" id="CHEBI:145989"/>
    </ligand>
</feature>
<feature type="binding site" evidence="1">
    <location>
        <position position="337"/>
    </location>
    <ligand>
        <name>3-phosphoshikimate</name>
        <dbReference type="ChEBI" id="CHEBI:145989"/>
    </ligand>
</feature>
<feature type="binding site" evidence="1">
    <location>
        <position position="341"/>
    </location>
    <ligand>
        <name>3-phosphoshikimate</name>
        <dbReference type="ChEBI" id="CHEBI:145989"/>
    </ligand>
</feature>
<feature type="binding site" evidence="1">
    <location>
        <position position="345"/>
    </location>
    <ligand>
        <name>phosphoenolpyruvate</name>
        <dbReference type="ChEBI" id="CHEBI:58702"/>
    </ligand>
</feature>
<feature type="binding site" evidence="1">
    <location>
        <position position="387"/>
    </location>
    <ligand>
        <name>phosphoenolpyruvate</name>
        <dbReference type="ChEBI" id="CHEBI:58702"/>
    </ligand>
</feature>
<feature type="binding site" evidence="1">
    <location>
        <position position="412"/>
    </location>
    <ligand>
        <name>phosphoenolpyruvate</name>
        <dbReference type="ChEBI" id="CHEBI:58702"/>
    </ligand>
</feature>
<reference key="1">
    <citation type="submission" date="2007-08" db="EMBL/GenBank/DDBJ databases">
        <authorList>
            <consortium name="The Vibrio harveyi Genome Sequencing Project"/>
            <person name="Bassler B."/>
            <person name="Clifton S.W."/>
            <person name="Fulton L."/>
            <person name="Delehaunty K."/>
            <person name="Fronick C."/>
            <person name="Harrison M."/>
            <person name="Markivic C."/>
            <person name="Fulton R."/>
            <person name="Tin-Wollam A.-M."/>
            <person name="Shah N."/>
            <person name="Pepin K."/>
            <person name="Nash W."/>
            <person name="Thiruvilangam P."/>
            <person name="Bhonagiri V."/>
            <person name="Waters C."/>
            <person name="Tu K.C."/>
            <person name="Irgon J."/>
            <person name="Wilson R.K."/>
        </authorList>
    </citation>
    <scope>NUCLEOTIDE SEQUENCE [LARGE SCALE GENOMIC DNA]</scope>
    <source>
        <strain>ATCC BAA-1116 / BB120</strain>
    </source>
</reference>
<accession>A7N1K3</accession>
<name>AROA_VIBC1</name>
<comment type="function">
    <text evidence="1">Catalyzes the transfer of the enolpyruvyl moiety of phosphoenolpyruvate (PEP) to the 5-hydroxyl of shikimate-3-phosphate (S3P) to produce enolpyruvyl shikimate-3-phosphate and inorganic phosphate.</text>
</comment>
<comment type="catalytic activity">
    <reaction evidence="1">
        <text>3-phosphoshikimate + phosphoenolpyruvate = 5-O-(1-carboxyvinyl)-3-phosphoshikimate + phosphate</text>
        <dbReference type="Rhea" id="RHEA:21256"/>
        <dbReference type="ChEBI" id="CHEBI:43474"/>
        <dbReference type="ChEBI" id="CHEBI:57701"/>
        <dbReference type="ChEBI" id="CHEBI:58702"/>
        <dbReference type="ChEBI" id="CHEBI:145989"/>
        <dbReference type="EC" id="2.5.1.19"/>
    </reaction>
    <physiologicalReaction direction="left-to-right" evidence="1">
        <dbReference type="Rhea" id="RHEA:21257"/>
    </physiologicalReaction>
</comment>
<comment type="pathway">
    <text evidence="1">Metabolic intermediate biosynthesis; chorismate biosynthesis; chorismate from D-erythrose 4-phosphate and phosphoenolpyruvate: step 6/7.</text>
</comment>
<comment type="subunit">
    <text evidence="1">Monomer.</text>
</comment>
<comment type="subcellular location">
    <subcellularLocation>
        <location evidence="1">Cytoplasm</location>
    </subcellularLocation>
</comment>
<comment type="similarity">
    <text evidence="1">Belongs to the EPSP synthase family.</text>
</comment>
<sequence length="426" mass="46131">MESLTLQPINKIQGEVNLPGSKSVSNRALLLAALAKGTTRLTNLLDSDDIRHMLNALTKLGVQYQLSEDKTECVVEGLGRPFSVSEPVELFLGNAGTAMRPLAAALCLGEGEYVLTGEPRMKERPIGHLVKALKAAGADVTYLENENYPPLKIVGTGLKPGSVSIDGSISSQFLTAFLMSAPLAEGDIRINIEGELVSKPYIDITLHIMKQFGVDVINNDYQEFVIPVGQQYVAPGDFLVEGDASSASYFLAAAAIKGGEVKVTGIGKNSIQGDIQFADALEKMGADIEWGDDYVISRVGQLKGIDMDYNHIPDAAMTIATTALFAEGTTSIRNVYNWRVKETDRLSAMATELRKVGAEVEEGEDYIIVKPVPQLTHAAIDTYDDHRMAMCFSLVALSDKPVTINDPKCTSKTFPDYFDKLKALSC</sequence>
<dbReference type="EC" id="2.5.1.19" evidence="1"/>
<dbReference type="EMBL" id="CP000789">
    <property type="protein sequence ID" value="ABU70542.1"/>
    <property type="molecule type" value="Genomic_DNA"/>
</dbReference>
<dbReference type="RefSeq" id="WP_012127428.1">
    <property type="nucleotide sequence ID" value="NC_009783.1"/>
</dbReference>
<dbReference type="SMR" id="A7N1K3"/>
<dbReference type="KEGG" id="vha:VIBHAR_01572"/>
<dbReference type="PATRIC" id="fig|338187.25.peg.1091"/>
<dbReference type="UniPathway" id="UPA00053">
    <property type="reaction ID" value="UER00089"/>
</dbReference>
<dbReference type="Proteomes" id="UP000008152">
    <property type="component" value="Chromosome I"/>
</dbReference>
<dbReference type="GO" id="GO:0005737">
    <property type="term" value="C:cytoplasm"/>
    <property type="evidence" value="ECO:0007669"/>
    <property type="project" value="UniProtKB-SubCell"/>
</dbReference>
<dbReference type="GO" id="GO:0003866">
    <property type="term" value="F:3-phosphoshikimate 1-carboxyvinyltransferase activity"/>
    <property type="evidence" value="ECO:0007669"/>
    <property type="project" value="UniProtKB-UniRule"/>
</dbReference>
<dbReference type="GO" id="GO:0008652">
    <property type="term" value="P:amino acid biosynthetic process"/>
    <property type="evidence" value="ECO:0007669"/>
    <property type="project" value="UniProtKB-KW"/>
</dbReference>
<dbReference type="GO" id="GO:0009073">
    <property type="term" value="P:aromatic amino acid family biosynthetic process"/>
    <property type="evidence" value="ECO:0007669"/>
    <property type="project" value="UniProtKB-KW"/>
</dbReference>
<dbReference type="GO" id="GO:0009423">
    <property type="term" value="P:chorismate biosynthetic process"/>
    <property type="evidence" value="ECO:0007669"/>
    <property type="project" value="UniProtKB-UniRule"/>
</dbReference>
<dbReference type="CDD" id="cd01556">
    <property type="entry name" value="EPSP_synthase"/>
    <property type="match status" value="1"/>
</dbReference>
<dbReference type="FunFam" id="3.65.10.10:FF:000003">
    <property type="entry name" value="3-phosphoshikimate 1-carboxyvinyltransferase"/>
    <property type="match status" value="1"/>
</dbReference>
<dbReference type="FunFam" id="3.65.10.10:FF:000004">
    <property type="entry name" value="3-phosphoshikimate 1-carboxyvinyltransferase"/>
    <property type="match status" value="1"/>
</dbReference>
<dbReference type="Gene3D" id="3.65.10.10">
    <property type="entry name" value="Enolpyruvate transferase domain"/>
    <property type="match status" value="2"/>
</dbReference>
<dbReference type="HAMAP" id="MF_00210">
    <property type="entry name" value="EPSP_synth"/>
    <property type="match status" value="1"/>
</dbReference>
<dbReference type="InterPro" id="IPR001986">
    <property type="entry name" value="Enolpyruvate_Tfrase_dom"/>
</dbReference>
<dbReference type="InterPro" id="IPR036968">
    <property type="entry name" value="Enolpyruvate_Tfrase_sf"/>
</dbReference>
<dbReference type="InterPro" id="IPR006264">
    <property type="entry name" value="EPSP_synthase"/>
</dbReference>
<dbReference type="InterPro" id="IPR023193">
    <property type="entry name" value="EPSP_synthase_CS"/>
</dbReference>
<dbReference type="InterPro" id="IPR013792">
    <property type="entry name" value="RNA3'P_cycl/enolpyr_Trfase_a/b"/>
</dbReference>
<dbReference type="NCBIfam" id="TIGR01356">
    <property type="entry name" value="aroA"/>
    <property type="match status" value="1"/>
</dbReference>
<dbReference type="PANTHER" id="PTHR21090">
    <property type="entry name" value="AROM/DEHYDROQUINATE SYNTHASE"/>
    <property type="match status" value="1"/>
</dbReference>
<dbReference type="PANTHER" id="PTHR21090:SF5">
    <property type="entry name" value="PENTAFUNCTIONAL AROM POLYPEPTIDE"/>
    <property type="match status" value="1"/>
</dbReference>
<dbReference type="Pfam" id="PF00275">
    <property type="entry name" value="EPSP_synthase"/>
    <property type="match status" value="1"/>
</dbReference>
<dbReference type="PIRSF" id="PIRSF000505">
    <property type="entry name" value="EPSPS"/>
    <property type="match status" value="1"/>
</dbReference>
<dbReference type="SUPFAM" id="SSF55205">
    <property type="entry name" value="EPT/RTPC-like"/>
    <property type="match status" value="1"/>
</dbReference>
<dbReference type="PROSITE" id="PS00104">
    <property type="entry name" value="EPSP_SYNTHASE_1"/>
    <property type="match status" value="1"/>
</dbReference>
<dbReference type="PROSITE" id="PS00885">
    <property type="entry name" value="EPSP_SYNTHASE_2"/>
    <property type="match status" value="1"/>
</dbReference>
<proteinExistence type="inferred from homology"/>
<organism>
    <name type="scientific">Vibrio campbellii (strain ATCC BAA-1116)</name>
    <dbReference type="NCBI Taxonomy" id="2902295"/>
    <lineage>
        <taxon>Bacteria</taxon>
        <taxon>Pseudomonadati</taxon>
        <taxon>Pseudomonadota</taxon>
        <taxon>Gammaproteobacteria</taxon>
        <taxon>Vibrionales</taxon>
        <taxon>Vibrionaceae</taxon>
        <taxon>Vibrio</taxon>
    </lineage>
</organism>